<dbReference type="EMBL" id="CP000261">
    <property type="protein sequence ID" value="ABF36899.1"/>
    <property type="molecule type" value="Genomic_DNA"/>
</dbReference>
<dbReference type="SMR" id="Q1J9B2"/>
<dbReference type="KEGG" id="spj:MGAS2096_Spy1847"/>
<dbReference type="HOGENOM" id="CLU_129084_2_3_9"/>
<dbReference type="GO" id="GO:0015934">
    <property type="term" value="C:large ribosomal subunit"/>
    <property type="evidence" value="ECO:0007669"/>
    <property type="project" value="InterPro"/>
</dbReference>
<dbReference type="GO" id="GO:0003735">
    <property type="term" value="F:structural constituent of ribosome"/>
    <property type="evidence" value="ECO:0007669"/>
    <property type="project" value="InterPro"/>
</dbReference>
<dbReference type="GO" id="GO:0006412">
    <property type="term" value="P:translation"/>
    <property type="evidence" value="ECO:0007669"/>
    <property type="project" value="UniProtKB-UniRule"/>
</dbReference>
<dbReference type="HAMAP" id="MF_00340">
    <property type="entry name" value="Ribosomal_bL32"/>
    <property type="match status" value="1"/>
</dbReference>
<dbReference type="InterPro" id="IPR002677">
    <property type="entry name" value="Ribosomal_bL32"/>
</dbReference>
<dbReference type="InterPro" id="IPR044957">
    <property type="entry name" value="Ribosomal_bL32_bact"/>
</dbReference>
<dbReference type="InterPro" id="IPR011332">
    <property type="entry name" value="Ribosomal_zn-bd"/>
</dbReference>
<dbReference type="NCBIfam" id="TIGR01031">
    <property type="entry name" value="rpmF_bact"/>
    <property type="match status" value="1"/>
</dbReference>
<dbReference type="PANTHER" id="PTHR35534">
    <property type="entry name" value="50S RIBOSOMAL PROTEIN L32"/>
    <property type="match status" value="1"/>
</dbReference>
<dbReference type="PANTHER" id="PTHR35534:SF1">
    <property type="entry name" value="LARGE RIBOSOMAL SUBUNIT PROTEIN BL32"/>
    <property type="match status" value="1"/>
</dbReference>
<dbReference type="Pfam" id="PF01783">
    <property type="entry name" value="Ribosomal_L32p"/>
    <property type="match status" value="1"/>
</dbReference>
<dbReference type="SUPFAM" id="SSF57829">
    <property type="entry name" value="Zn-binding ribosomal proteins"/>
    <property type="match status" value="1"/>
</dbReference>
<protein>
    <recommendedName>
        <fullName evidence="1">Large ribosomal subunit protein bL32</fullName>
    </recommendedName>
    <alternativeName>
        <fullName evidence="3">50S ribosomal protein L32</fullName>
    </alternativeName>
</protein>
<gene>
    <name evidence="1" type="primary">rpmF</name>
    <name type="ordered locus">MGAS2096_Spy1847</name>
</gene>
<name>RL32_STRPB</name>
<organism>
    <name type="scientific">Streptococcus pyogenes serotype M12 (strain MGAS2096)</name>
    <dbReference type="NCBI Taxonomy" id="370553"/>
    <lineage>
        <taxon>Bacteria</taxon>
        <taxon>Bacillati</taxon>
        <taxon>Bacillota</taxon>
        <taxon>Bacilli</taxon>
        <taxon>Lactobacillales</taxon>
        <taxon>Streptococcaceae</taxon>
        <taxon>Streptococcus</taxon>
    </lineage>
</organism>
<accession>Q1J9B2</accession>
<keyword id="KW-0687">Ribonucleoprotein</keyword>
<keyword id="KW-0689">Ribosomal protein</keyword>
<comment type="similarity">
    <text evidence="1">Belongs to the bacterial ribosomal protein bL32 family.</text>
</comment>
<sequence length="60" mass="6865">MAVPARHTSKAKKNKRRTHYKLTAPSVQFDETTGDYSRSHRVSLKGYYKGRKIAKANEAK</sequence>
<reference key="1">
    <citation type="journal article" date="2006" name="Proc. Natl. Acad. Sci. U.S.A.">
        <title>Molecular genetic anatomy of inter- and intraserotype variation in the human bacterial pathogen group A Streptococcus.</title>
        <authorList>
            <person name="Beres S.B."/>
            <person name="Richter E.W."/>
            <person name="Nagiec M.J."/>
            <person name="Sumby P."/>
            <person name="Porcella S.F."/>
            <person name="DeLeo F.R."/>
            <person name="Musser J.M."/>
        </authorList>
    </citation>
    <scope>NUCLEOTIDE SEQUENCE [LARGE SCALE GENOMIC DNA]</scope>
    <source>
        <strain>MGAS2096</strain>
    </source>
</reference>
<evidence type="ECO:0000255" key="1">
    <source>
        <dbReference type="HAMAP-Rule" id="MF_00340"/>
    </source>
</evidence>
<evidence type="ECO:0000256" key="2">
    <source>
        <dbReference type="SAM" id="MobiDB-lite"/>
    </source>
</evidence>
<evidence type="ECO:0000305" key="3"/>
<feature type="chain" id="PRO_0000296574" description="Large ribosomal subunit protein bL32">
    <location>
        <begin position="1"/>
        <end position="60"/>
    </location>
</feature>
<feature type="region of interest" description="Disordered" evidence="2">
    <location>
        <begin position="1"/>
        <end position="22"/>
    </location>
</feature>
<feature type="compositionally biased region" description="Basic residues" evidence="2">
    <location>
        <begin position="7"/>
        <end position="20"/>
    </location>
</feature>
<proteinExistence type="inferred from homology"/>